<organism>
    <name type="scientific">Buchnera aphidicola subsp. Schizaphis graminum (strain Sg)</name>
    <dbReference type="NCBI Taxonomy" id="198804"/>
    <lineage>
        <taxon>Bacteria</taxon>
        <taxon>Pseudomonadati</taxon>
        <taxon>Pseudomonadota</taxon>
        <taxon>Gammaproteobacteria</taxon>
        <taxon>Enterobacterales</taxon>
        <taxon>Erwiniaceae</taxon>
        <taxon>Buchnera</taxon>
    </lineage>
</organism>
<proteinExistence type="inferred from homology"/>
<accession>Q8K9R6</accession>
<evidence type="ECO:0000255" key="1">
    <source>
        <dbReference type="HAMAP-Rule" id="MF_00460"/>
    </source>
</evidence>
<sequence length="95" mass="11137">MNIIKVKVVYALPDIQYIKEVHIDSNSTVKDAILASNLLNTVKNIQFYKNNVGIYNKLVHLNENVKNGDRIEIYRNLIIDPKERRRKRSNICLKK</sequence>
<dbReference type="EMBL" id="AE013218">
    <property type="protein sequence ID" value="AAM67803.1"/>
    <property type="molecule type" value="Genomic_DNA"/>
</dbReference>
<dbReference type="RefSeq" id="WP_011053770.1">
    <property type="nucleotide sequence ID" value="NC_004061.1"/>
</dbReference>
<dbReference type="SMR" id="Q8K9R6"/>
<dbReference type="STRING" id="198804.BUsg_244"/>
<dbReference type="GeneID" id="93003714"/>
<dbReference type="KEGG" id="bas:BUsg_244"/>
<dbReference type="eggNOG" id="COG2914">
    <property type="taxonomic scope" value="Bacteria"/>
</dbReference>
<dbReference type="HOGENOM" id="CLU_150721_1_0_6"/>
<dbReference type="Proteomes" id="UP000000416">
    <property type="component" value="Chromosome"/>
</dbReference>
<dbReference type="Gene3D" id="3.10.20.280">
    <property type="entry name" value="RnfH-like"/>
    <property type="match status" value="1"/>
</dbReference>
<dbReference type="HAMAP" id="MF_00460">
    <property type="entry name" value="UPF0125_RnfH"/>
    <property type="match status" value="1"/>
</dbReference>
<dbReference type="InterPro" id="IPR016155">
    <property type="entry name" value="Mopterin_synth/thiamin_S_b"/>
</dbReference>
<dbReference type="InterPro" id="IPR005346">
    <property type="entry name" value="RnfH"/>
</dbReference>
<dbReference type="InterPro" id="IPR037021">
    <property type="entry name" value="RnfH_sf"/>
</dbReference>
<dbReference type="NCBIfam" id="NF002490">
    <property type="entry name" value="PRK01777.1"/>
    <property type="match status" value="1"/>
</dbReference>
<dbReference type="PANTHER" id="PTHR37483">
    <property type="entry name" value="UPF0125 PROTEIN RATB"/>
    <property type="match status" value="1"/>
</dbReference>
<dbReference type="PANTHER" id="PTHR37483:SF1">
    <property type="entry name" value="UPF0125 PROTEIN RATB"/>
    <property type="match status" value="1"/>
</dbReference>
<dbReference type="Pfam" id="PF03658">
    <property type="entry name" value="Ub-RnfH"/>
    <property type="match status" value="1"/>
</dbReference>
<dbReference type="SUPFAM" id="SSF54285">
    <property type="entry name" value="MoaD/ThiS"/>
    <property type="match status" value="1"/>
</dbReference>
<reference key="1">
    <citation type="journal article" date="2002" name="Science">
        <title>50 million years of genomic stasis in endosymbiotic bacteria.</title>
        <authorList>
            <person name="Tamas I."/>
            <person name="Klasson L."/>
            <person name="Canbaeck B."/>
            <person name="Naeslund A.K."/>
            <person name="Eriksson A.-S."/>
            <person name="Wernegreen J.J."/>
            <person name="Sandstroem J.P."/>
            <person name="Moran N.A."/>
            <person name="Andersson S.G.E."/>
        </authorList>
    </citation>
    <scope>NUCLEOTIDE SEQUENCE [LARGE SCALE GENOMIC DNA]</scope>
    <source>
        <strain>Sg</strain>
    </source>
</reference>
<protein>
    <recommendedName>
        <fullName evidence="1">UPF0125 protein BUsg_244</fullName>
    </recommendedName>
</protein>
<comment type="similarity">
    <text evidence="1">Belongs to the UPF0125 (RnfH) family.</text>
</comment>
<gene>
    <name type="ordered locus">BUsg_244</name>
</gene>
<name>Y244_BUCAP</name>
<feature type="chain" id="PRO_0000192483" description="UPF0125 protein BUsg_244">
    <location>
        <begin position="1"/>
        <end position="95"/>
    </location>
</feature>